<feature type="chain" id="PRO_1000149803" description="Ribosome maturation factor RimP">
    <location>
        <begin position="1"/>
        <end position="204"/>
    </location>
</feature>
<feature type="region of interest" description="Disordered" evidence="2">
    <location>
        <begin position="176"/>
        <end position="204"/>
    </location>
</feature>
<feature type="compositionally biased region" description="Acidic residues" evidence="2">
    <location>
        <begin position="181"/>
        <end position="198"/>
    </location>
</feature>
<comment type="function">
    <text evidence="1">Required for maturation of 30S ribosomal subunits.</text>
</comment>
<comment type="subcellular location">
    <subcellularLocation>
        <location evidence="1">Cytoplasm</location>
    </subcellularLocation>
</comment>
<comment type="similarity">
    <text evidence="1">Belongs to the RimP family.</text>
</comment>
<proteinExistence type="inferred from homology"/>
<dbReference type="EMBL" id="CP001150">
    <property type="protein sequence ID" value="ACM02418.1"/>
    <property type="molecule type" value="Genomic_DNA"/>
</dbReference>
<dbReference type="RefSeq" id="WP_015921502.1">
    <property type="nucleotide sequence ID" value="NC_011963.1"/>
</dbReference>
<dbReference type="SMR" id="B9KPN3"/>
<dbReference type="GeneID" id="67447936"/>
<dbReference type="KEGG" id="rsk:RSKD131_2558"/>
<dbReference type="HOGENOM" id="CLU_070525_0_1_5"/>
<dbReference type="GO" id="GO:0005829">
    <property type="term" value="C:cytosol"/>
    <property type="evidence" value="ECO:0007669"/>
    <property type="project" value="TreeGrafter"/>
</dbReference>
<dbReference type="GO" id="GO:0000028">
    <property type="term" value="P:ribosomal small subunit assembly"/>
    <property type="evidence" value="ECO:0007669"/>
    <property type="project" value="TreeGrafter"/>
</dbReference>
<dbReference type="GO" id="GO:0006412">
    <property type="term" value="P:translation"/>
    <property type="evidence" value="ECO:0007669"/>
    <property type="project" value="TreeGrafter"/>
</dbReference>
<dbReference type="CDD" id="cd01734">
    <property type="entry name" value="YlxS_C"/>
    <property type="match status" value="1"/>
</dbReference>
<dbReference type="FunFam" id="3.30.300.70:FF:000001">
    <property type="entry name" value="Ribosome maturation factor RimP"/>
    <property type="match status" value="1"/>
</dbReference>
<dbReference type="Gene3D" id="2.30.30.180">
    <property type="entry name" value="Ribosome maturation factor RimP, C-terminal domain"/>
    <property type="match status" value="1"/>
</dbReference>
<dbReference type="Gene3D" id="3.30.300.70">
    <property type="entry name" value="RimP-like superfamily, N-terminal"/>
    <property type="match status" value="1"/>
</dbReference>
<dbReference type="HAMAP" id="MF_01077">
    <property type="entry name" value="RimP"/>
    <property type="match status" value="1"/>
</dbReference>
<dbReference type="InterPro" id="IPR003728">
    <property type="entry name" value="Ribosome_maturation_RimP"/>
</dbReference>
<dbReference type="InterPro" id="IPR028998">
    <property type="entry name" value="RimP_C"/>
</dbReference>
<dbReference type="InterPro" id="IPR036847">
    <property type="entry name" value="RimP_C_sf"/>
</dbReference>
<dbReference type="InterPro" id="IPR028989">
    <property type="entry name" value="RimP_N"/>
</dbReference>
<dbReference type="InterPro" id="IPR035956">
    <property type="entry name" value="RimP_N_sf"/>
</dbReference>
<dbReference type="NCBIfam" id="NF000932">
    <property type="entry name" value="PRK00092.2-5"/>
    <property type="match status" value="1"/>
</dbReference>
<dbReference type="PANTHER" id="PTHR33867">
    <property type="entry name" value="RIBOSOME MATURATION FACTOR RIMP"/>
    <property type="match status" value="1"/>
</dbReference>
<dbReference type="PANTHER" id="PTHR33867:SF1">
    <property type="entry name" value="RIBOSOME MATURATION FACTOR RIMP"/>
    <property type="match status" value="1"/>
</dbReference>
<dbReference type="Pfam" id="PF17384">
    <property type="entry name" value="DUF150_C"/>
    <property type="match status" value="1"/>
</dbReference>
<dbReference type="Pfam" id="PF02576">
    <property type="entry name" value="RimP_N"/>
    <property type="match status" value="1"/>
</dbReference>
<dbReference type="SUPFAM" id="SSF74942">
    <property type="entry name" value="YhbC-like, C-terminal domain"/>
    <property type="match status" value="1"/>
</dbReference>
<dbReference type="SUPFAM" id="SSF75420">
    <property type="entry name" value="YhbC-like, N-terminal domain"/>
    <property type="match status" value="1"/>
</dbReference>
<evidence type="ECO:0000255" key="1">
    <source>
        <dbReference type="HAMAP-Rule" id="MF_01077"/>
    </source>
</evidence>
<evidence type="ECO:0000256" key="2">
    <source>
        <dbReference type="SAM" id="MobiDB-lite"/>
    </source>
</evidence>
<accession>B9KPN3</accession>
<name>RIMP_CERSK</name>
<reference key="1">
    <citation type="journal article" date="2009" name="J. Bacteriol.">
        <title>Complete genome sequence of Rhodobacter sphaeroides KD131.</title>
        <authorList>
            <person name="Lim S.-K."/>
            <person name="Kim S.J."/>
            <person name="Cha S.H."/>
            <person name="Oh Y.-K."/>
            <person name="Rhee H.-J."/>
            <person name="Kim M.-S."/>
            <person name="Lee J.K."/>
        </authorList>
    </citation>
    <scope>NUCLEOTIDE SEQUENCE [LARGE SCALE GENOMIC DNA]</scope>
    <source>
        <strain>KD131 / KCTC 12085</strain>
    </source>
</reference>
<organism>
    <name type="scientific">Cereibacter sphaeroides (strain KD131 / KCTC 12085)</name>
    <name type="common">Rhodobacter sphaeroides</name>
    <dbReference type="NCBI Taxonomy" id="557760"/>
    <lineage>
        <taxon>Bacteria</taxon>
        <taxon>Pseudomonadati</taxon>
        <taxon>Pseudomonadota</taxon>
        <taxon>Alphaproteobacteria</taxon>
        <taxon>Rhodobacterales</taxon>
        <taxon>Paracoccaceae</taxon>
        <taxon>Cereibacter</taxon>
    </lineage>
</organism>
<sequence length="204" mass="22708">MSDLVAKTAIDRRLADIVTPVIEGMGFELVRLRLMSGKTRTLQIMADRPDGGIVVDECAEISTAVSAALDVEDPIEENYTLEVSSPGIDRPLTRLKDFDVWTGYEARIETTELIDGRRRFKGELAGTEGDEVLITIEDGRDGYVTIGLKFDWLADAKLILTEELIAEMLRQKKASGNFDESQFDEIEESEGEEADEAEQPPTKH</sequence>
<gene>
    <name evidence="1" type="primary">rimP</name>
    <name type="ordered locus">RSKD131_2558</name>
</gene>
<keyword id="KW-0963">Cytoplasm</keyword>
<keyword id="KW-0690">Ribosome biogenesis</keyword>
<protein>
    <recommendedName>
        <fullName evidence="1">Ribosome maturation factor RimP</fullName>
    </recommendedName>
</protein>